<reference key="1">
    <citation type="journal article" date="2009" name="Proc. Natl. Acad. Sci. U.S.A.">
        <title>Eukaryote-to-eukaryote gene transfer events revealed by the genome sequence of the wine yeast Saccharomyces cerevisiae EC1118.</title>
        <authorList>
            <person name="Novo M."/>
            <person name="Bigey F."/>
            <person name="Beyne E."/>
            <person name="Galeote V."/>
            <person name="Gavory F."/>
            <person name="Mallet S."/>
            <person name="Cambon B."/>
            <person name="Legras J.-L."/>
            <person name="Wincker P."/>
            <person name="Casaregola S."/>
            <person name="Dequin S."/>
        </authorList>
    </citation>
    <scope>NUCLEOTIDE SEQUENCE [LARGE SCALE GENOMIC DNA]</scope>
    <source>
        <strain>Lalvin EC1118 / Prise de mousse</strain>
    </source>
</reference>
<keyword id="KW-0968">Cytoplasmic vesicle</keyword>
<keyword id="KW-0256">Endoplasmic reticulum</keyword>
<keyword id="KW-0325">Glycoprotein</keyword>
<keyword id="KW-0333">Golgi apparatus</keyword>
<keyword id="KW-0472">Membrane</keyword>
<keyword id="KW-0762">Sugar transport</keyword>
<keyword id="KW-0812">Transmembrane</keyword>
<keyword id="KW-1133">Transmembrane helix</keyword>
<keyword id="KW-0813">Transport</keyword>
<proteinExistence type="inferred from homology"/>
<feature type="chain" id="PRO_0000391674" description="GDP-mannose transporter 1">
    <location>
        <begin position="1"/>
        <end position="337"/>
    </location>
</feature>
<feature type="topological domain" description="Cytoplasmic" evidence="1">
    <location>
        <begin position="1"/>
        <end position="16"/>
    </location>
</feature>
<feature type="transmembrane region" description="Helical" evidence="2">
    <location>
        <begin position="17"/>
        <end position="37"/>
    </location>
</feature>
<feature type="topological domain" description="Lumenal" evidence="1">
    <location>
        <begin position="38"/>
        <end position="51"/>
    </location>
</feature>
<feature type="transmembrane region" description="Helical" evidence="2">
    <location>
        <begin position="52"/>
        <end position="72"/>
    </location>
</feature>
<feature type="topological domain" description="Cytoplasmic" evidence="1">
    <location>
        <begin position="73"/>
        <end position="92"/>
    </location>
</feature>
<feature type="transmembrane region" description="Helical" evidence="2">
    <location>
        <begin position="93"/>
        <end position="113"/>
    </location>
</feature>
<feature type="topological domain" description="Lumenal" evidence="1">
    <location>
        <begin position="114"/>
        <end position="119"/>
    </location>
</feature>
<feature type="transmembrane region" description="Helical" evidence="2">
    <location>
        <begin position="120"/>
        <end position="140"/>
    </location>
</feature>
<feature type="topological domain" description="Cytoplasmic" evidence="1">
    <location>
        <begin position="141"/>
        <end position="144"/>
    </location>
</feature>
<feature type="transmembrane region" description="Helical" evidence="2">
    <location>
        <begin position="145"/>
        <end position="165"/>
    </location>
</feature>
<feature type="topological domain" description="Lumenal" evidence="1">
    <location>
        <begin position="166"/>
        <end position="180"/>
    </location>
</feature>
<feature type="transmembrane region" description="Helical" evidence="2">
    <location>
        <begin position="181"/>
        <end position="201"/>
    </location>
</feature>
<feature type="topological domain" description="Cytoplasmic" evidence="1">
    <location>
        <begin position="202"/>
        <end position="215"/>
    </location>
</feature>
<feature type="transmembrane region" description="Helical" evidence="2">
    <location>
        <begin position="216"/>
        <end position="236"/>
    </location>
</feature>
<feature type="topological domain" description="Lumenal" evidence="1">
    <location>
        <begin position="237"/>
        <end position="252"/>
    </location>
</feature>
<feature type="transmembrane region" description="Helical" evidence="2">
    <location>
        <begin position="253"/>
        <end position="273"/>
    </location>
</feature>
<feature type="topological domain" description="Cytoplasmic" evidence="1">
    <location>
        <begin position="274"/>
        <end position="279"/>
    </location>
</feature>
<feature type="transmembrane region" description="Helical" evidence="2">
    <location>
        <begin position="280"/>
        <end position="300"/>
    </location>
</feature>
<feature type="topological domain" description="Lumenal" evidence="1">
    <location>
        <begin position="301"/>
        <end position="304"/>
    </location>
</feature>
<feature type="transmembrane region" description="Helical" evidence="2">
    <location>
        <begin position="305"/>
        <end position="325"/>
    </location>
</feature>
<feature type="topological domain" description="Cytoplasmic" evidence="1">
    <location>
        <begin position="326"/>
        <end position="337"/>
    </location>
</feature>
<feature type="glycosylation site" description="N-linked (GlcNAc...) asparagine" evidence="2">
    <location>
        <position position="119"/>
    </location>
</feature>
<feature type="glycosylation site" description="N-linked (GlcNAc...) asparagine" evidence="2">
    <location>
        <position position="242"/>
    </location>
</feature>
<feature type="glycosylation site" description="N-linked (GlcNAc...) asparagine" evidence="2">
    <location>
        <position position="246"/>
    </location>
</feature>
<feature type="glycosylation site" description="N-linked (GlcNAc...) asparagine" evidence="2">
    <location>
        <position position="249"/>
    </location>
</feature>
<accession>C8Z830</accession>
<protein>
    <recommendedName>
        <fullName>GDP-mannose transporter 1</fullName>
        <shortName>GMT 1</shortName>
    </recommendedName>
    <alternativeName>
        <fullName>Low dye-binding protein 3</fullName>
    </alternativeName>
    <alternativeName>
        <fullName>Morphogenesis checkpoint-dependent protein 3</fullName>
    </alternativeName>
    <alternativeName>
        <fullName>Vanadate resistance glycosylation protein 4</fullName>
    </alternativeName>
</protein>
<organism>
    <name type="scientific">Saccharomyces cerevisiae (strain Lalvin EC1118 / Prise de mousse)</name>
    <name type="common">Baker's yeast</name>
    <dbReference type="NCBI Taxonomy" id="643680"/>
    <lineage>
        <taxon>Eukaryota</taxon>
        <taxon>Fungi</taxon>
        <taxon>Dikarya</taxon>
        <taxon>Ascomycota</taxon>
        <taxon>Saccharomycotina</taxon>
        <taxon>Saccharomycetes</taxon>
        <taxon>Saccharomycetales</taxon>
        <taxon>Saccharomycetaceae</taxon>
        <taxon>Saccharomyces</taxon>
    </lineage>
</organism>
<name>GMT1_YEAS8</name>
<comment type="function">
    <text evidence="1">Involved in the import of GDP-mannose from the cytoplasm into the Golgi lumen. Defective copy causes severe glycosylation defect and abnormal retention of soluble endoplasmic reticulum proteins. Involved in vanadate sensitivity (By similarity).</text>
</comment>
<comment type="subunit">
    <text evidence="1">Homooligomer.</text>
</comment>
<comment type="subcellular location">
    <subcellularLocation>
        <location evidence="1">Golgi apparatus membrane</location>
        <topology evidence="1">Multi-pass membrane protein</topology>
    </subcellularLocation>
    <subcellularLocation>
        <location evidence="1">Cytoplasmic vesicle membrane</location>
        <topology evidence="1">Multi-pass membrane protein</topology>
    </subcellularLocation>
    <subcellularLocation>
        <location evidence="1">Endoplasmic reticulum membrane</location>
        <topology evidence="1">Multi-pass membrane protein</topology>
    </subcellularLocation>
    <text evidence="1">Recycles between the Golgi apparatus and the endoplasmic reticulum.</text>
</comment>
<comment type="similarity">
    <text evidence="3">Belongs to the TPT transporter family. SLC35D subfamily.</text>
</comment>
<gene>
    <name type="primary">VRG4</name>
    <name type="synonym">GOG5</name>
    <name type="synonym">LDB3</name>
    <name type="synonym">MCD3</name>
    <name type="synonym">VAN2</name>
    <name type="synonym">VIG4</name>
    <name type="ORF">EC1118_1G1_0463g</name>
</gene>
<evidence type="ECO:0000250" key="1"/>
<evidence type="ECO:0000255" key="2"/>
<evidence type="ECO:0000305" key="3"/>
<sequence>MSELKTGHAGHNPWASVANSGPISILSYCGSSILMTVTNKFVVNLKDFNMNFVMLFVQSLVCTITLIILRILGYAKFRSLNKTDAKNWFPISFLLVLMIYTSSKALQYLAVPIYTIFKNLTIILIAYGEVLFFGGSVTSMELSSFLLMVLSSVVATWGDQQAVAAKAASLAEGAAGAVASFNPGYFWMFTNCITSALFVLIMRKRIKLTNFKDFDTMFYNNVLALPILLLFSFCVEDWSSVNLTNNFSNDSLTAMIISGVASVGISYCSGWCVRVTSSTTYSMVGALNKLPIALSGLIFFDAPRNFLSILSIFIGFLSGIIYAVAKQKKQQAQPLRK</sequence>
<dbReference type="EMBL" id="FN393070">
    <property type="protein sequence ID" value="CAY79546.1"/>
    <property type="molecule type" value="Genomic_DNA"/>
</dbReference>
<dbReference type="SMR" id="C8Z830"/>
<dbReference type="GlyCosmos" id="C8Z830">
    <property type="glycosylation" value="4 sites, No reported glycans"/>
</dbReference>
<dbReference type="TopDownProteomics" id="C8Z830"/>
<dbReference type="HOGENOM" id="CLU_025360_1_2_1"/>
<dbReference type="OrthoDB" id="3994at4893"/>
<dbReference type="Proteomes" id="UP000000286">
    <property type="component" value="Chromosome VII, Scaffold EC1118_1G1"/>
</dbReference>
<dbReference type="GO" id="GO:0030659">
    <property type="term" value="C:cytoplasmic vesicle membrane"/>
    <property type="evidence" value="ECO:0007669"/>
    <property type="project" value="UniProtKB-SubCell"/>
</dbReference>
<dbReference type="GO" id="GO:0005789">
    <property type="term" value="C:endoplasmic reticulum membrane"/>
    <property type="evidence" value="ECO:0007669"/>
    <property type="project" value="UniProtKB-SubCell"/>
</dbReference>
<dbReference type="GO" id="GO:0000139">
    <property type="term" value="C:Golgi membrane"/>
    <property type="evidence" value="ECO:0007669"/>
    <property type="project" value="UniProtKB-SubCell"/>
</dbReference>
<dbReference type="GO" id="GO:0055085">
    <property type="term" value="P:transmembrane transport"/>
    <property type="evidence" value="ECO:0007669"/>
    <property type="project" value="InterPro"/>
</dbReference>
<dbReference type="InterPro" id="IPR013657">
    <property type="entry name" value="SCL35B1-4/HUT1"/>
</dbReference>
<dbReference type="InterPro" id="IPR050186">
    <property type="entry name" value="TPT_transporter"/>
</dbReference>
<dbReference type="NCBIfam" id="TIGR00803">
    <property type="entry name" value="nst"/>
    <property type="match status" value="1"/>
</dbReference>
<dbReference type="PANTHER" id="PTHR11132">
    <property type="entry name" value="SOLUTE CARRIER FAMILY 35"/>
    <property type="match status" value="1"/>
</dbReference>
<dbReference type="Pfam" id="PF08449">
    <property type="entry name" value="UAA"/>
    <property type="match status" value="1"/>
</dbReference>
<dbReference type="SUPFAM" id="SSF103481">
    <property type="entry name" value="Multidrug resistance efflux transporter EmrE"/>
    <property type="match status" value="1"/>
</dbReference>